<reference key="1">
    <citation type="book" date="2006" name="Gram positive pathogens, 2nd edition">
        <title>The Staphylococcus aureus NCTC 8325 genome.</title>
        <editorList>
            <person name="Fischetti V."/>
            <person name="Novick R."/>
            <person name="Ferretti J."/>
            <person name="Portnoy D."/>
            <person name="Rood J."/>
        </editorList>
        <authorList>
            <person name="Gillaspy A.F."/>
            <person name="Worrell V."/>
            <person name="Orvis J."/>
            <person name="Roe B.A."/>
            <person name="Dyer D.W."/>
            <person name="Iandolo J.J."/>
        </authorList>
    </citation>
    <scope>NUCLEOTIDE SEQUENCE [LARGE SCALE GENOMIC DNA]</scope>
    <source>
        <strain>NCTC 8325 / PS 47</strain>
    </source>
</reference>
<reference key="2">
    <citation type="journal article" date="2015" name="Infect. Immun.">
        <title>Characterization of a novel two-component regulatory system, HptRS, the regulator for the hexose phosphate transport system in Staphylococcus aureus.</title>
        <authorList>
            <person name="Park J.Y."/>
            <person name="Kim J.W."/>
            <person name="Moon B.Y."/>
            <person name="Lee J."/>
            <person name="Fortin Y.J."/>
            <person name="Austin F.W."/>
            <person name="Yang S.J."/>
            <person name="Seo K.S."/>
        </authorList>
    </citation>
    <scope>DISRUPTION PHENOTYPE</scope>
    <scope>FUNCTION</scope>
</reference>
<reference key="3">
    <citation type="journal article" date="2018" name="PLoS ONE">
        <title>Coordinated regulation of transcription by CcpA and the Staphylococcus aureus two-component system HptRS.</title>
        <authorList>
            <person name="Reed J.M."/>
            <person name="Olson S."/>
            <person name="Brees D.F."/>
            <person name="Griffin C.E."/>
            <person name="Grove R.A."/>
            <person name="Davis P.J."/>
            <person name="Kachman S.D."/>
            <person name="Adamec J."/>
            <person name="Somerville G.A."/>
        </authorList>
    </citation>
    <scope>DISRUPTION PHENOTYPE</scope>
    <scope>FUNCTION</scope>
</reference>
<name>HPTS_STAA8</name>
<evidence type="ECO:0000250" key="1"/>
<evidence type="ECO:0000255" key="2"/>
<evidence type="ECO:0000269" key="3">
    <source>
    </source>
</evidence>
<evidence type="ECO:0000269" key="4">
    <source>
    </source>
</evidence>
<evidence type="ECO:0000305" key="5"/>
<evidence type="ECO:0007829" key="6">
    <source>
        <dbReference type="PDB" id="6LKI"/>
    </source>
</evidence>
<organism>
    <name type="scientific">Staphylococcus aureus (strain NCTC 8325 / PS 47)</name>
    <dbReference type="NCBI Taxonomy" id="93061"/>
    <lineage>
        <taxon>Bacteria</taxon>
        <taxon>Bacillati</taxon>
        <taxon>Bacillota</taxon>
        <taxon>Bacilli</taxon>
        <taxon>Bacillales</taxon>
        <taxon>Staphylococcaceae</taxon>
        <taxon>Staphylococcus</taxon>
    </lineage>
</organism>
<proteinExistence type="evidence at protein level"/>
<keyword id="KW-0002">3D-structure</keyword>
<keyword id="KW-0067">ATP-binding</keyword>
<keyword id="KW-1003">Cell membrane</keyword>
<keyword id="KW-0418">Kinase</keyword>
<keyword id="KW-0472">Membrane</keyword>
<keyword id="KW-0547">Nucleotide-binding</keyword>
<keyword id="KW-0597">Phosphoprotein</keyword>
<keyword id="KW-1185">Reference proteome</keyword>
<keyword id="KW-0808">Transferase</keyword>
<keyword id="KW-0812">Transmembrane</keyword>
<keyword id="KW-1133">Transmembrane helix</keyword>
<keyword id="KW-0902">Two-component regulatory system</keyword>
<dbReference type="EC" id="2.7.13.3"/>
<dbReference type="EMBL" id="CP000253">
    <property type="protein sequence ID" value="ABD29363.1"/>
    <property type="molecule type" value="Genomic_DNA"/>
</dbReference>
<dbReference type="RefSeq" id="WP_000127982.1">
    <property type="nucleotide sequence ID" value="NZ_LS483365.1"/>
</dbReference>
<dbReference type="RefSeq" id="YP_498782.1">
    <property type="nucleotide sequence ID" value="NC_007795.1"/>
</dbReference>
<dbReference type="PDB" id="6LKG">
    <property type="method" value="X-ray"/>
    <property type="resolution" value="1.95 A"/>
    <property type="chains" value="B/D=45-215"/>
</dbReference>
<dbReference type="PDB" id="6LKH">
    <property type="method" value="X-ray"/>
    <property type="resolution" value="2.53 A"/>
    <property type="chains" value="C/D=45-215"/>
</dbReference>
<dbReference type="PDB" id="6LKI">
    <property type="method" value="X-ray"/>
    <property type="resolution" value="1.78 A"/>
    <property type="chains" value="B=45-215"/>
</dbReference>
<dbReference type="PDBsum" id="6LKG"/>
<dbReference type="PDBsum" id="6LKH"/>
<dbReference type="PDBsum" id="6LKI"/>
<dbReference type="SMR" id="Q2G1E0"/>
<dbReference type="STRING" id="93061.SAOUHSC_00185"/>
<dbReference type="PaxDb" id="1280-SAXN108_0199"/>
<dbReference type="GeneID" id="3919499"/>
<dbReference type="KEGG" id="sao:SAOUHSC_00185"/>
<dbReference type="PATRIC" id="fig|93061.5.peg.173"/>
<dbReference type="eggNOG" id="COG2972">
    <property type="taxonomic scope" value="Bacteria"/>
</dbReference>
<dbReference type="HOGENOM" id="CLU_525720_0_0_9"/>
<dbReference type="OrthoDB" id="9776552at2"/>
<dbReference type="PRO" id="PR:Q2G1E0"/>
<dbReference type="Proteomes" id="UP000008816">
    <property type="component" value="Chromosome"/>
</dbReference>
<dbReference type="GO" id="GO:0005886">
    <property type="term" value="C:plasma membrane"/>
    <property type="evidence" value="ECO:0000318"/>
    <property type="project" value="GO_Central"/>
</dbReference>
<dbReference type="GO" id="GO:0005524">
    <property type="term" value="F:ATP binding"/>
    <property type="evidence" value="ECO:0007669"/>
    <property type="project" value="UniProtKB-KW"/>
</dbReference>
<dbReference type="GO" id="GO:0000155">
    <property type="term" value="F:phosphorelay sensor kinase activity"/>
    <property type="evidence" value="ECO:0000318"/>
    <property type="project" value="GO_Central"/>
</dbReference>
<dbReference type="GO" id="GO:0007165">
    <property type="term" value="P:signal transduction"/>
    <property type="evidence" value="ECO:0000318"/>
    <property type="project" value="GO_Central"/>
</dbReference>
<dbReference type="Gene3D" id="3.30.565.10">
    <property type="entry name" value="Histidine kinase-like ATPase, C-terminal domain"/>
    <property type="match status" value="1"/>
</dbReference>
<dbReference type="InterPro" id="IPR050640">
    <property type="entry name" value="Bact_2-comp_sensor_kinase"/>
</dbReference>
<dbReference type="InterPro" id="IPR036890">
    <property type="entry name" value="HATPase_C_sf"/>
</dbReference>
<dbReference type="InterPro" id="IPR010559">
    <property type="entry name" value="Sig_transdc_His_kin_internal"/>
</dbReference>
<dbReference type="PANTHER" id="PTHR34220">
    <property type="entry name" value="SENSOR HISTIDINE KINASE YPDA"/>
    <property type="match status" value="1"/>
</dbReference>
<dbReference type="PANTHER" id="PTHR34220:SF11">
    <property type="entry name" value="SENSOR PROTEIN KINASE HPTS"/>
    <property type="match status" value="1"/>
</dbReference>
<dbReference type="Pfam" id="PF02518">
    <property type="entry name" value="HATPase_c"/>
    <property type="match status" value="1"/>
</dbReference>
<dbReference type="Pfam" id="PF06580">
    <property type="entry name" value="His_kinase"/>
    <property type="match status" value="1"/>
</dbReference>
<dbReference type="SUPFAM" id="SSF55874">
    <property type="entry name" value="ATPase domain of HSP90 chaperone/DNA topoisomerase II/histidine kinase"/>
    <property type="match status" value="1"/>
</dbReference>
<gene>
    <name type="primary">hptS</name>
    <name type="ordered locus">SAOUHSC_00185</name>
</gene>
<accession>Q2G1E0</accession>
<feature type="chain" id="PRO_0000299126" description="Sensor protein kinase HptS">
    <location>
        <begin position="1"/>
        <end position="518"/>
    </location>
</feature>
<feature type="transmembrane region" description="Helical" evidence="2">
    <location>
        <begin position="20"/>
        <end position="40"/>
    </location>
</feature>
<feature type="transmembrane region" description="Helical" evidence="2">
    <location>
        <begin position="222"/>
        <end position="242"/>
    </location>
</feature>
<feature type="domain" description="Histidine kinase">
    <location>
        <begin position="297"/>
        <end position="513"/>
    </location>
</feature>
<feature type="modified residue" description="Phosphohistidine; by autocatalysis" evidence="1">
    <location>
        <position position="325"/>
    </location>
</feature>
<feature type="helix" evidence="6">
    <location>
        <begin position="46"/>
        <end position="75"/>
    </location>
</feature>
<feature type="helix" evidence="6">
    <location>
        <begin position="83"/>
        <end position="99"/>
    </location>
</feature>
<feature type="strand" evidence="6">
    <location>
        <begin position="100"/>
        <end position="110"/>
    </location>
</feature>
<feature type="strand" evidence="6">
    <location>
        <begin position="113"/>
        <end position="117"/>
    </location>
</feature>
<feature type="helix" evidence="6">
    <location>
        <begin position="124"/>
        <end position="126"/>
    </location>
</feature>
<feature type="strand" evidence="6">
    <location>
        <begin position="127"/>
        <end position="136"/>
    </location>
</feature>
<feature type="strand" evidence="6">
    <location>
        <begin position="138"/>
        <end position="150"/>
    </location>
</feature>
<feature type="helix" evidence="6">
    <location>
        <begin position="152"/>
        <end position="160"/>
    </location>
</feature>
<feature type="strand" evidence="6">
    <location>
        <begin position="164"/>
        <end position="169"/>
    </location>
</feature>
<feature type="strand" evidence="6">
    <location>
        <begin position="173"/>
        <end position="178"/>
    </location>
</feature>
<feature type="turn" evidence="6">
    <location>
        <begin position="191"/>
        <end position="193"/>
    </location>
</feature>
<feature type="strand" evidence="6">
    <location>
        <begin position="196"/>
        <end position="201"/>
    </location>
</feature>
<feature type="strand" evidence="6">
    <location>
        <begin position="203"/>
        <end position="213"/>
    </location>
</feature>
<protein>
    <recommendedName>
        <fullName>Sensor protein kinase HptS</fullName>
        <ecNumber>2.7.13.3</ecNumber>
    </recommendedName>
</protein>
<sequence>MTAYKPYRHQLRRSLFASTIFPVFLVIIIGLVSFYAIYIWIEHRTIHQHVDESQSSLHHTEKQIQTFITQHNNSFQELDLTNHHDVTATKRELLKLIHQQPATLYYELSGPNQFITNNYEHLNTKNMYLFSTHQLKFKNSTYMLKIYMANTPRLSEIKKDNRQFALIVDQYDNILYANDDRFTIGEKYRPQQFGFMNESVKLNHADHRLIIYKDIHENIEDGITLLIVMAVVLVLLVIFGFISADNMAKRQTKDIETIIQKIYYAKNRHLGTYTPLKNNSELEEINNYIYDLFESNEQLIHSIEHTERRLRDIQLKEIERQFQPHFLFNTMQTIQYLITLSPKLAQTVVQQLSQMLRYSLRTNSHTVELNEELNYIEQYVAIQNIRFDDMIKLHIESSEEARHQTIGKMMLQPLIENAIKHGRDTESLDITIRLTLARQNLHVLVCDNGIGMSSSRLQYVRQSLNNDVFDTKHLGLNHLHNKAMIQYGSHARLHIFSKRNQGTLICYKIPLSRGNVDV</sequence>
<comment type="function">
    <text evidence="3 4">Member of the two-component regulatory system HptS/HptR that regulates genes involved in hexose phosphate transport system in response to changes in extracellular phosphate sources (PubMed:25644013). May act as a sensor protein kinase which is autophosphorylated at a histidine residue and transfers its phosphate group to the conserved aspartic acid residue in the regulatory domain of HptS. In turn, HptS antagonizes CcpA-dependent transcription of a subset of CcpA-regulated genes involved in antibiotic susceptibility (PubMed:30540769).</text>
</comment>
<comment type="catalytic activity">
    <reaction>
        <text>ATP + protein L-histidine = ADP + protein N-phospho-L-histidine.</text>
        <dbReference type="EC" id="2.7.13.3"/>
    </reaction>
</comment>
<comment type="subcellular location">
    <subcellularLocation>
        <location evidence="5">Cell membrane</location>
        <topology evidence="5">Multi-pass membrane protein</topology>
    </subcellularLocation>
</comment>
<comment type="PTM">
    <text evidence="1">Autophosphorylated.</text>
</comment>
<comment type="disruption phenotype">
    <text evidence="3 4">Deletion leads to impaired growth when the available carbon source is limited to glucose-6-phosphate (PubMed:25644013). Deletion also alters antibiotic susceptibility (PubMed:30540769).</text>
</comment>